<gene>
    <name evidence="1" type="primary">glpK</name>
    <name type="ordered locus">SAK_0345</name>
</gene>
<proteinExistence type="inferred from homology"/>
<dbReference type="EC" id="2.7.1.30" evidence="1"/>
<dbReference type="EMBL" id="CP000114">
    <property type="protein sequence ID" value="ABA45689.1"/>
    <property type="molecule type" value="Genomic_DNA"/>
</dbReference>
<dbReference type="RefSeq" id="WP_000093527.1">
    <property type="nucleotide sequence ID" value="NC_007432.1"/>
</dbReference>
<dbReference type="SMR" id="Q3K3A6"/>
<dbReference type="KEGG" id="sak:SAK_0345"/>
<dbReference type="HOGENOM" id="CLU_009281_2_3_9"/>
<dbReference type="UniPathway" id="UPA00618">
    <property type="reaction ID" value="UER00672"/>
</dbReference>
<dbReference type="GO" id="GO:0005829">
    <property type="term" value="C:cytosol"/>
    <property type="evidence" value="ECO:0007669"/>
    <property type="project" value="TreeGrafter"/>
</dbReference>
<dbReference type="GO" id="GO:0005524">
    <property type="term" value="F:ATP binding"/>
    <property type="evidence" value="ECO:0007669"/>
    <property type="project" value="UniProtKB-UniRule"/>
</dbReference>
<dbReference type="GO" id="GO:0004370">
    <property type="term" value="F:glycerol kinase activity"/>
    <property type="evidence" value="ECO:0000250"/>
    <property type="project" value="UniProtKB"/>
</dbReference>
<dbReference type="GO" id="GO:0019563">
    <property type="term" value="P:glycerol catabolic process"/>
    <property type="evidence" value="ECO:0007669"/>
    <property type="project" value="UniProtKB-UniRule"/>
</dbReference>
<dbReference type="GO" id="GO:0006071">
    <property type="term" value="P:glycerol metabolic process"/>
    <property type="evidence" value="ECO:0000250"/>
    <property type="project" value="UniProtKB"/>
</dbReference>
<dbReference type="GO" id="GO:0006072">
    <property type="term" value="P:glycerol-3-phosphate metabolic process"/>
    <property type="evidence" value="ECO:0007669"/>
    <property type="project" value="InterPro"/>
</dbReference>
<dbReference type="CDD" id="cd07786">
    <property type="entry name" value="FGGY_EcGK_like"/>
    <property type="match status" value="1"/>
</dbReference>
<dbReference type="FunFam" id="3.30.420.40:FF:000007">
    <property type="entry name" value="Glycerol kinase"/>
    <property type="match status" value="1"/>
</dbReference>
<dbReference type="FunFam" id="3.30.420.40:FF:000008">
    <property type="entry name" value="Glycerol kinase"/>
    <property type="match status" value="1"/>
</dbReference>
<dbReference type="Gene3D" id="3.30.420.40">
    <property type="match status" value="2"/>
</dbReference>
<dbReference type="HAMAP" id="MF_00186">
    <property type="entry name" value="Glycerol_kin"/>
    <property type="match status" value="1"/>
</dbReference>
<dbReference type="InterPro" id="IPR043129">
    <property type="entry name" value="ATPase_NBD"/>
</dbReference>
<dbReference type="InterPro" id="IPR000577">
    <property type="entry name" value="Carb_kinase_FGGY"/>
</dbReference>
<dbReference type="InterPro" id="IPR018483">
    <property type="entry name" value="Carb_kinase_FGGY_CS"/>
</dbReference>
<dbReference type="InterPro" id="IPR018485">
    <property type="entry name" value="FGGY_C"/>
</dbReference>
<dbReference type="InterPro" id="IPR018484">
    <property type="entry name" value="FGGY_N"/>
</dbReference>
<dbReference type="InterPro" id="IPR005999">
    <property type="entry name" value="Glycerol_kin"/>
</dbReference>
<dbReference type="NCBIfam" id="TIGR01311">
    <property type="entry name" value="glycerol_kin"/>
    <property type="match status" value="1"/>
</dbReference>
<dbReference type="NCBIfam" id="NF000756">
    <property type="entry name" value="PRK00047.1"/>
    <property type="match status" value="1"/>
</dbReference>
<dbReference type="PANTHER" id="PTHR10196:SF69">
    <property type="entry name" value="GLYCEROL KINASE"/>
    <property type="match status" value="1"/>
</dbReference>
<dbReference type="PANTHER" id="PTHR10196">
    <property type="entry name" value="SUGAR KINASE"/>
    <property type="match status" value="1"/>
</dbReference>
<dbReference type="Pfam" id="PF02782">
    <property type="entry name" value="FGGY_C"/>
    <property type="match status" value="1"/>
</dbReference>
<dbReference type="Pfam" id="PF00370">
    <property type="entry name" value="FGGY_N"/>
    <property type="match status" value="1"/>
</dbReference>
<dbReference type="PIRSF" id="PIRSF000538">
    <property type="entry name" value="GlpK"/>
    <property type="match status" value="1"/>
</dbReference>
<dbReference type="SUPFAM" id="SSF53067">
    <property type="entry name" value="Actin-like ATPase domain"/>
    <property type="match status" value="2"/>
</dbReference>
<dbReference type="PROSITE" id="PS00933">
    <property type="entry name" value="FGGY_KINASES_1"/>
    <property type="match status" value="1"/>
</dbReference>
<dbReference type="PROSITE" id="PS00445">
    <property type="entry name" value="FGGY_KINASES_2"/>
    <property type="match status" value="1"/>
</dbReference>
<evidence type="ECO:0000255" key="1">
    <source>
        <dbReference type="HAMAP-Rule" id="MF_00186"/>
    </source>
</evidence>
<organism>
    <name type="scientific">Streptococcus agalactiae serotype Ia (strain ATCC 27591 / A909 / CDC SS700)</name>
    <dbReference type="NCBI Taxonomy" id="205921"/>
    <lineage>
        <taxon>Bacteria</taxon>
        <taxon>Bacillati</taxon>
        <taxon>Bacillota</taxon>
        <taxon>Bacilli</taxon>
        <taxon>Lactobacillales</taxon>
        <taxon>Streptococcaceae</taxon>
        <taxon>Streptococcus</taxon>
    </lineage>
</organism>
<accession>Q3K3A6</accession>
<protein>
    <recommendedName>
        <fullName evidence="1">Glycerol kinase</fullName>
        <ecNumber evidence="1">2.7.1.30</ecNumber>
    </recommendedName>
    <alternativeName>
        <fullName evidence="1">ATP:glycerol 3-phosphotransferase</fullName>
    </alternativeName>
    <alternativeName>
        <fullName evidence="1">Glycerokinase</fullName>
        <shortName evidence="1">GK</shortName>
    </alternativeName>
</protein>
<sequence length="502" mass="55434">MSSEEKYIMAIDQGTTSSRAIIFNKKGEKIASSQKEFPQIFPQAGWVEHNANQIWNSVQSVIAGAFIESSIKPGQIEAIGITNQRETTVVWDKKTGLPIYNAIVWQSRQTAPIADQLKQEGHTNMIHEKTGLVIDAYFSATKVRWILDHVPGAQERAEKGELLFGTIDTWLVWKLTDGLVHVTDYSNAARTMLYNIKELKWDDEILELLNIPKAMLPEVKSNSEVYGKTTPFHFYGGEVPISGMAGDQQAALFGQLAFEPGMVKNTYGTGSFIIMNTGEEMQLSQNNLLTTIGYGINGKVHYALEGSIFIAGSAIQWLRDGLRMIETSSESEGLAQSSTSDDEVYVVPAFTGLGAPYWDSNARGSVFGLTRGTSKEDFVKATLQSIAYQVRDVIDTMQVDSGIDIQQLRVDGGAAMNNLLMQFQADILGIDIARAKNLETTALGAAFLAGLSVGYWESMDELKELNATGQLFQATMNESRKEKLYKGWRKAVKATQVFAQED</sequence>
<reference key="1">
    <citation type="journal article" date="2005" name="Proc. Natl. Acad. Sci. U.S.A.">
        <title>Genome analysis of multiple pathogenic isolates of Streptococcus agalactiae: implications for the microbial 'pan-genome'.</title>
        <authorList>
            <person name="Tettelin H."/>
            <person name="Masignani V."/>
            <person name="Cieslewicz M.J."/>
            <person name="Donati C."/>
            <person name="Medini D."/>
            <person name="Ward N.L."/>
            <person name="Angiuoli S.V."/>
            <person name="Crabtree J."/>
            <person name="Jones A.L."/>
            <person name="Durkin A.S."/>
            <person name="DeBoy R.T."/>
            <person name="Davidsen T.M."/>
            <person name="Mora M."/>
            <person name="Scarselli M."/>
            <person name="Margarit y Ros I."/>
            <person name="Peterson J.D."/>
            <person name="Hauser C.R."/>
            <person name="Sundaram J.P."/>
            <person name="Nelson W.C."/>
            <person name="Madupu R."/>
            <person name="Brinkac L.M."/>
            <person name="Dodson R.J."/>
            <person name="Rosovitz M.J."/>
            <person name="Sullivan S.A."/>
            <person name="Daugherty S.C."/>
            <person name="Haft D.H."/>
            <person name="Selengut J."/>
            <person name="Gwinn M.L."/>
            <person name="Zhou L."/>
            <person name="Zafar N."/>
            <person name="Khouri H."/>
            <person name="Radune D."/>
            <person name="Dimitrov G."/>
            <person name="Watkins K."/>
            <person name="O'Connor K.J."/>
            <person name="Smith S."/>
            <person name="Utterback T.R."/>
            <person name="White O."/>
            <person name="Rubens C.E."/>
            <person name="Grandi G."/>
            <person name="Madoff L.C."/>
            <person name="Kasper D.L."/>
            <person name="Telford J.L."/>
            <person name="Wessels M.R."/>
            <person name="Rappuoli R."/>
            <person name="Fraser C.M."/>
        </authorList>
    </citation>
    <scope>NUCLEOTIDE SEQUENCE [LARGE SCALE GENOMIC DNA]</scope>
    <source>
        <strain>ATCC 27591 / A909 / CDC SS700</strain>
    </source>
</reference>
<feature type="chain" id="PRO_1000020797" description="Glycerol kinase">
    <location>
        <begin position="1"/>
        <end position="502"/>
    </location>
</feature>
<feature type="binding site" evidence="1">
    <location>
        <position position="15"/>
    </location>
    <ligand>
        <name>ADP</name>
        <dbReference type="ChEBI" id="CHEBI:456216"/>
    </ligand>
</feature>
<feature type="binding site" evidence="1">
    <location>
        <position position="15"/>
    </location>
    <ligand>
        <name>ATP</name>
        <dbReference type="ChEBI" id="CHEBI:30616"/>
    </ligand>
</feature>
<feature type="binding site" evidence="1">
    <location>
        <position position="15"/>
    </location>
    <ligand>
        <name>sn-glycerol 3-phosphate</name>
        <dbReference type="ChEBI" id="CHEBI:57597"/>
    </ligand>
</feature>
<feature type="binding site" evidence="1">
    <location>
        <position position="16"/>
    </location>
    <ligand>
        <name>ATP</name>
        <dbReference type="ChEBI" id="CHEBI:30616"/>
    </ligand>
</feature>
<feature type="binding site" evidence="1">
    <location>
        <position position="17"/>
    </location>
    <ligand>
        <name>ATP</name>
        <dbReference type="ChEBI" id="CHEBI:30616"/>
    </ligand>
</feature>
<feature type="binding site" evidence="1">
    <location>
        <position position="19"/>
    </location>
    <ligand>
        <name>ADP</name>
        <dbReference type="ChEBI" id="CHEBI:456216"/>
    </ligand>
</feature>
<feature type="binding site" evidence="1">
    <location>
        <position position="85"/>
    </location>
    <ligand>
        <name>glycerol</name>
        <dbReference type="ChEBI" id="CHEBI:17754"/>
    </ligand>
</feature>
<feature type="binding site" evidence="1">
    <location>
        <position position="85"/>
    </location>
    <ligand>
        <name>sn-glycerol 3-phosphate</name>
        <dbReference type="ChEBI" id="CHEBI:57597"/>
    </ligand>
</feature>
<feature type="binding site" evidence="1">
    <location>
        <position position="86"/>
    </location>
    <ligand>
        <name>glycerol</name>
        <dbReference type="ChEBI" id="CHEBI:17754"/>
    </ligand>
</feature>
<feature type="binding site" evidence="1">
    <location>
        <position position="86"/>
    </location>
    <ligand>
        <name>sn-glycerol 3-phosphate</name>
        <dbReference type="ChEBI" id="CHEBI:57597"/>
    </ligand>
</feature>
<feature type="binding site" evidence="1">
    <location>
        <position position="137"/>
    </location>
    <ligand>
        <name>glycerol</name>
        <dbReference type="ChEBI" id="CHEBI:17754"/>
    </ligand>
</feature>
<feature type="binding site" evidence="1">
    <location>
        <position position="137"/>
    </location>
    <ligand>
        <name>sn-glycerol 3-phosphate</name>
        <dbReference type="ChEBI" id="CHEBI:57597"/>
    </ligand>
</feature>
<feature type="binding site" evidence="1">
    <location>
        <position position="247"/>
    </location>
    <ligand>
        <name>glycerol</name>
        <dbReference type="ChEBI" id="CHEBI:17754"/>
    </ligand>
</feature>
<feature type="binding site" evidence="1">
    <location>
        <position position="247"/>
    </location>
    <ligand>
        <name>sn-glycerol 3-phosphate</name>
        <dbReference type="ChEBI" id="CHEBI:57597"/>
    </ligand>
</feature>
<feature type="binding site" evidence="1">
    <location>
        <position position="248"/>
    </location>
    <ligand>
        <name>glycerol</name>
        <dbReference type="ChEBI" id="CHEBI:17754"/>
    </ligand>
</feature>
<feature type="binding site" evidence="1">
    <location>
        <position position="269"/>
    </location>
    <ligand>
        <name>ADP</name>
        <dbReference type="ChEBI" id="CHEBI:456216"/>
    </ligand>
</feature>
<feature type="binding site" evidence="1">
    <location>
        <position position="269"/>
    </location>
    <ligand>
        <name>ATP</name>
        <dbReference type="ChEBI" id="CHEBI:30616"/>
    </ligand>
</feature>
<feature type="binding site" evidence="1">
    <location>
        <position position="312"/>
    </location>
    <ligand>
        <name>ADP</name>
        <dbReference type="ChEBI" id="CHEBI:456216"/>
    </ligand>
</feature>
<feature type="binding site" evidence="1">
    <location>
        <position position="312"/>
    </location>
    <ligand>
        <name>ATP</name>
        <dbReference type="ChEBI" id="CHEBI:30616"/>
    </ligand>
</feature>
<feature type="binding site" evidence="1">
    <location>
        <position position="316"/>
    </location>
    <ligand>
        <name>ATP</name>
        <dbReference type="ChEBI" id="CHEBI:30616"/>
    </ligand>
</feature>
<feature type="binding site" evidence="1">
    <location>
        <position position="413"/>
    </location>
    <ligand>
        <name>ADP</name>
        <dbReference type="ChEBI" id="CHEBI:456216"/>
    </ligand>
</feature>
<feature type="binding site" evidence="1">
    <location>
        <position position="413"/>
    </location>
    <ligand>
        <name>ATP</name>
        <dbReference type="ChEBI" id="CHEBI:30616"/>
    </ligand>
</feature>
<feature type="binding site" evidence="1">
    <location>
        <position position="417"/>
    </location>
    <ligand>
        <name>ADP</name>
        <dbReference type="ChEBI" id="CHEBI:456216"/>
    </ligand>
</feature>
<feature type="modified residue" description="Phosphohistidine; by HPr" evidence="1">
    <location>
        <position position="233"/>
    </location>
</feature>
<comment type="function">
    <text evidence="1">Key enzyme in the regulation of glycerol uptake and metabolism. Catalyzes the phosphorylation of glycerol to yield sn-glycerol 3-phosphate.</text>
</comment>
<comment type="catalytic activity">
    <reaction evidence="1">
        <text>glycerol + ATP = sn-glycerol 3-phosphate + ADP + H(+)</text>
        <dbReference type="Rhea" id="RHEA:21644"/>
        <dbReference type="ChEBI" id="CHEBI:15378"/>
        <dbReference type="ChEBI" id="CHEBI:17754"/>
        <dbReference type="ChEBI" id="CHEBI:30616"/>
        <dbReference type="ChEBI" id="CHEBI:57597"/>
        <dbReference type="ChEBI" id="CHEBI:456216"/>
        <dbReference type="EC" id="2.7.1.30"/>
    </reaction>
</comment>
<comment type="activity regulation">
    <text evidence="1">Activated by phosphorylation and inhibited by fructose 1,6-bisphosphate (FBP).</text>
</comment>
<comment type="pathway">
    <text evidence="1">Polyol metabolism; glycerol degradation via glycerol kinase pathway; sn-glycerol 3-phosphate from glycerol: step 1/1.</text>
</comment>
<comment type="subunit">
    <text evidence="1">Homotetramer and homodimer (in equilibrium).</text>
</comment>
<comment type="PTM">
    <text evidence="1">The phosphoenolpyruvate-dependent sugar phosphotransferase system (PTS), including enzyme I, and histidine-containing protein (HPr) are required for the phosphorylation, which leads to the activation of the enzyme.</text>
</comment>
<comment type="similarity">
    <text evidence="1">Belongs to the FGGY kinase family.</text>
</comment>
<name>GLPK_STRA1</name>
<keyword id="KW-0067">ATP-binding</keyword>
<keyword id="KW-0319">Glycerol metabolism</keyword>
<keyword id="KW-0418">Kinase</keyword>
<keyword id="KW-0547">Nucleotide-binding</keyword>
<keyword id="KW-0597">Phosphoprotein</keyword>
<keyword id="KW-0808">Transferase</keyword>